<reference key="1">
    <citation type="journal article" date="2005" name="Science">
        <title>The transcriptional landscape of the mammalian genome.</title>
        <authorList>
            <person name="Carninci P."/>
            <person name="Kasukawa T."/>
            <person name="Katayama S."/>
            <person name="Gough J."/>
            <person name="Frith M.C."/>
            <person name="Maeda N."/>
            <person name="Oyama R."/>
            <person name="Ravasi T."/>
            <person name="Lenhard B."/>
            <person name="Wells C."/>
            <person name="Kodzius R."/>
            <person name="Shimokawa K."/>
            <person name="Bajic V.B."/>
            <person name="Brenner S.E."/>
            <person name="Batalov S."/>
            <person name="Forrest A.R."/>
            <person name="Zavolan M."/>
            <person name="Davis M.J."/>
            <person name="Wilming L.G."/>
            <person name="Aidinis V."/>
            <person name="Allen J.E."/>
            <person name="Ambesi-Impiombato A."/>
            <person name="Apweiler R."/>
            <person name="Aturaliya R.N."/>
            <person name="Bailey T.L."/>
            <person name="Bansal M."/>
            <person name="Baxter L."/>
            <person name="Beisel K.W."/>
            <person name="Bersano T."/>
            <person name="Bono H."/>
            <person name="Chalk A.M."/>
            <person name="Chiu K.P."/>
            <person name="Choudhary V."/>
            <person name="Christoffels A."/>
            <person name="Clutterbuck D.R."/>
            <person name="Crowe M.L."/>
            <person name="Dalla E."/>
            <person name="Dalrymple B.P."/>
            <person name="de Bono B."/>
            <person name="Della Gatta G."/>
            <person name="di Bernardo D."/>
            <person name="Down T."/>
            <person name="Engstrom P."/>
            <person name="Fagiolini M."/>
            <person name="Faulkner G."/>
            <person name="Fletcher C.F."/>
            <person name="Fukushima T."/>
            <person name="Furuno M."/>
            <person name="Futaki S."/>
            <person name="Gariboldi M."/>
            <person name="Georgii-Hemming P."/>
            <person name="Gingeras T.R."/>
            <person name="Gojobori T."/>
            <person name="Green R.E."/>
            <person name="Gustincich S."/>
            <person name="Harbers M."/>
            <person name="Hayashi Y."/>
            <person name="Hensch T.K."/>
            <person name="Hirokawa N."/>
            <person name="Hill D."/>
            <person name="Huminiecki L."/>
            <person name="Iacono M."/>
            <person name="Ikeo K."/>
            <person name="Iwama A."/>
            <person name="Ishikawa T."/>
            <person name="Jakt M."/>
            <person name="Kanapin A."/>
            <person name="Katoh M."/>
            <person name="Kawasawa Y."/>
            <person name="Kelso J."/>
            <person name="Kitamura H."/>
            <person name="Kitano H."/>
            <person name="Kollias G."/>
            <person name="Krishnan S.P."/>
            <person name="Kruger A."/>
            <person name="Kummerfeld S.K."/>
            <person name="Kurochkin I.V."/>
            <person name="Lareau L.F."/>
            <person name="Lazarevic D."/>
            <person name="Lipovich L."/>
            <person name="Liu J."/>
            <person name="Liuni S."/>
            <person name="McWilliam S."/>
            <person name="Madan Babu M."/>
            <person name="Madera M."/>
            <person name="Marchionni L."/>
            <person name="Matsuda H."/>
            <person name="Matsuzawa S."/>
            <person name="Miki H."/>
            <person name="Mignone F."/>
            <person name="Miyake S."/>
            <person name="Morris K."/>
            <person name="Mottagui-Tabar S."/>
            <person name="Mulder N."/>
            <person name="Nakano N."/>
            <person name="Nakauchi H."/>
            <person name="Ng P."/>
            <person name="Nilsson R."/>
            <person name="Nishiguchi S."/>
            <person name="Nishikawa S."/>
            <person name="Nori F."/>
            <person name="Ohara O."/>
            <person name="Okazaki Y."/>
            <person name="Orlando V."/>
            <person name="Pang K.C."/>
            <person name="Pavan W.J."/>
            <person name="Pavesi G."/>
            <person name="Pesole G."/>
            <person name="Petrovsky N."/>
            <person name="Piazza S."/>
            <person name="Reed J."/>
            <person name="Reid J.F."/>
            <person name="Ring B.Z."/>
            <person name="Ringwald M."/>
            <person name="Rost B."/>
            <person name="Ruan Y."/>
            <person name="Salzberg S.L."/>
            <person name="Sandelin A."/>
            <person name="Schneider C."/>
            <person name="Schoenbach C."/>
            <person name="Sekiguchi K."/>
            <person name="Semple C.A."/>
            <person name="Seno S."/>
            <person name="Sessa L."/>
            <person name="Sheng Y."/>
            <person name="Shibata Y."/>
            <person name="Shimada H."/>
            <person name="Shimada K."/>
            <person name="Silva D."/>
            <person name="Sinclair B."/>
            <person name="Sperling S."/>
            <person name="Stupka E."/>
            <person name="Sugiura K."/>
            <person name="Sultana R."/>
            <person name="Takenaka Y."/>
            <person name="Taki K."/>
            <person name="Tammoja K."/>
            <person name="Tan S.L."/>
            <person name="Tang S."/>
            <person name="Taylor M.S."/>
            <person name="Tegner J."/>
            <person name="Teichmann S.A."/>
            <person name="Ueda H.R."/>
            <person name="van Nimwegen E."/>
            <person name="Verardo R."/>
            <person name="Wei C.L."/>
            <person name="Yagi K."/>
            <person name="Yamanishi H."/>
            <person name="Zabarovsky E."/>
            <person name="Zhu S."/>
            <person name="Zimmer A."/>
            <person name="Hide W."/>
            <person name="Bult C."/>
            <person name="Grimmond S.M."/>
            <person name="Teasdale R.D."/>
            <person name="Liu E.T."/>
            <person name="Brusic V."/>
            <person name="Quackenbush J."/>
            <person name="Wahlestedt C."/>
            <person name="Mattick J.S."/>
            <person name="Hume D.A."/>
            <person name="Kai C."/>
            <person name="Sasaki D."/>
            <person name="Tomaru Y."/>
            <person name="Fukuda S."/>
            <person name="Kanamori-Katayama M."/>
            <person name="Suzuki M."/>
            <person name="Aoki J."/>
            <person name="Arakawa T."/>
            <person name="Iida J."/>
            <person name="Imamura K."/>
            <person name="Itoh M."/>
            <person name="Kato T."/>
            <person name="Kawaji H."/>
            <person name="Kawagashira N."/>
            <person name="Kawashima T."/>
            <person name="Kojima M."/>
            <person name="Kondo S."/>
            <person name="Konno H."/>
            <person name="Nakano K."/>
            <person name="Ninomiya N."/>
            <person name="Nishio T."/>
            <person name="Okada M."/>
            <person name="Plessy C."/>
            <person name="Shibata K."/>
            <person name="Shiraki T."/>
            <person name="Suzuki S."/>
            <person name="Tagami M."/>
            <person name="Waki K."/>
            <person name="Watahiki A."/>
            <person name="Okamura-Oho Y."/>
            <person name="Suzuki H."/>
            <person name="Kawai J."/>
            <person name="Hayashizaki Y."/>
        </authorList>
    </citation>
    <scope>NUCLEOTIDE SEQUENCE [LARGE SCALE MRNA]</scope>
    <source>
        <strain>C57BL/6J</strain>
        <tissue>Testis</tissue>
    </source>
</reference>
<reference key="2">
    <citation type="journal article" date="2004" name="Genome Res.">
        <title>The status, quality, and expansion of the NIH full-length cDNA project: the Mammalian Gene Collection (MGC).</title>
        <authorList>
            <consortium name="The MGC Project Team"/>
        </authorList>
    </citation>
    <scope>NUCLEOTIDE SEQUENCE [LARGE SCALE MRNA]</scope>
    <source>
        <strain>C57BL/6J</strain>
    </source>
</reference>
<reference key="3">
    <citation type="journal article" date="2007" name="Proc. Natl. Acad. Sci. U.S.A.">
        <title>Large-scale phosphorylation analysis of mouse liver.</title>
        <authorList>
            <person name="Villen J."/>
            <person name="Beausoleil S.A."/>
            <person name="Gerber S.A."/>
            <person name="Gygi S.P."/>
        </authorList>
    </citation>
    <scope>PHOSPHORYLATION [LARGE SCALE ANALYSIS] AT SER-67</scope>
    <scope>IDENTIFICATION BY MASS SPECTROMETRY [LARGE SCALE ANALYSIS]</scope>
    <source>
        <tissue>Liver</tissue>
    </source>
</reference>
<reference key="4">
    <citation type="journal article" date="2010" name="Cell">
        <title>A tissue-specific atlas of mouse protein phosphorylation and expression.</title>
        <authorList>
            <person name="Huttlin E.L."/>
            <person name="Jedrychowski M.P."/>
            <person name="Elias J.E."/>
            <person name="Goswami T."/>
            <person name="Rad R."/>
            <person name="Beausoleil S.A."/>
            <person name="Villen J."/>
            <person name="Haas W."/>
            <person name="Sowa M.E."/>
            <person name="Gygi S.P."/>
        </authorList>
    </citation>
    <scope>PHOSPHORYLATION [LARGE SCALE ANALYSIS] AT SER-67</scope>
    <scope>IDENTIFICATION BY MASS SPECTROMETRY [LARGE SCALE ANALYSIS]</scope>
    <source>
        <tissue>Brain</tissue>
        <tissue>Brown adipose tissue</tissue>
        <tissue>Heart</tissue>
        <tissue>Kidney</tissue>
        <tissue>Lung</tissue>
        <tissue>Spleen</tissue>
    </source>
</reference>
<accession>Q9D4F2</accession>
<proteinExistence type="evidence at protein level"/>
<dbReference type="EC" id="3.1.3.-" evidence="2"/>
<dbReference type="EC" id="3.6.1.-" evidence="2"/>
<dbReference type="EC" id="3.6.1.68" evidence="2"/>
<dbReference type="EMBL" id="AK016572">
    <property type="protein sequence ID" value="BAB30313.1"/>
    <property type="molecule type" value="mRNA"/>
</dbReference>
<dbReference type="EMBL" id="BC052412">
    <property type="protein sequence ID" value="AAH52412.1"/>
    <property type="molecule type" value="mRNA"/>
</dbReference>
<dbReference type="CCDS" id="CCDS29728.1"/>
<dbReference type="RefSeq" id="NP_083198.1">
    <property type="nucleotide sequence ID" value="NM_028922.3"/>
</dbReference>
<dbReference type="SMR" id="Q9D4F2"/>
<dbReference type="BioGRID" id="216729">
    <property type="interactions" value="1"/>
</dbReference>
<dbReference type="FunCoup" id="Q9D4F2">
    <property type="interactions" value="1000"/>
</dbReference>
<dbReference type="STRING" id="10090.ENSMUSP00000047776"/>
<dbReference type="iPTMnet" id="Q9D4F2"/>
<dbReference type="PhosphoSitePlus" id="Q9D4F2"/>
<dbReference type="SwissPalm" id="Q9D4F2"/>
<dbReference type="jPOST" id="Q9D4F2"/>
<dbReference type="PaxDb" id="10090-ENSMUSP00000047776"/>
<dbReference type="PeptideAtlas" id="Q9D4F2"/>
<dbReference type="ProteomicsDB" id="288257"/>
<dbReference type="Pumba" id="Q9D4F2"/>
<dbReference type="Antibodypedia" id="3112">
    <property type="antibodies" value="131 antibodies from 27 providers"/>
</dbReference>
<dbReference type="DNASU" id="74411"/>
<dbReference type="Ensembl" id="ENSMUST00000045674.4">
    <property type="protein sequence ID" value="ENSMUSP00000047776.3"/>
    <property type="gene ID" value="ENSMUSG00000040105.4"/>
</dbReference>
<dbReference type="GeneID" id="74411"/>
<dbReference type="KEGG" id="mmu:74411"/>
<dbReference type="UCSC" id="uc008hcr.2">
    <property type="organism name" value="mouse"/>
</dbReference>
<dbReference type="AGR" id="MGI:1921661"/>
<dbReference type="CTD" id="403313"/>
<dbReference type="MGI" id="MGI:1921661">
    <property type="gene designation" value="Plpp6"/>
</dbReference>
<dbReference type="VEuPathDB" id="HostDB:ENSMUSG00000040105"/>
<dbReference type="eggNOG" id="KOG4268">
    <property type="taxonomic scope" value="Eukaryota"/>
</dbReference>
<dbReference type="GeneTree" id="ENSGT00940000160907"/>
<dbReference type="HOGENOM" id="CLU_072573_4_0_1"/>
<dbReference type="InParanoid" id="Q9D4F2"/>
<dbReference type="OMA" id="GTVYCLY"/>
<dbReference type="OrthoDB" id="10266771at2759"/>
<dbReference type="PhylomeDB" id="Q9D4F2"/>
<dbReference type="TreeFam" id="TF323272"/>
<dbReference type="Reactome" id="R-MMU-191273">
    <property type="pathway name" value="Cholesterol biosynthesis"/>
</dbReference>
<dbReference type="BioGRID-ORCS" id="74411">
    <property type="hits" value="1 hit in 45 CRISPR screens"/>
</dbReference>
<dbReference type="ChiTaRS" id="Plpp6">
    <property type="organism name" value="mouse"/>
</dbReference>
<dbReference type="PRO" id="PR:Q9D4F2"/>
<dbReference type="Proteomes" id="UP000000589">
    <property type="component" value="Chromosome 19"/>
</dbReference>
<dbReference type="RNAct" id="Q9D4F2">
    <property type="molecule type" value="protein"/>
</dbReference>
<dbReference type="Bgee" id="ENSMUSG00000040105">
    <property type="expression patterns" value="Expressed in epithelium of small intestine and 219 other cell types or tissues"/>
</dbReference>
<dbReference type="GO" id="GO:0005789">
    <property type="term" value="C:endoplasmic reticulum membrane"/>
    <property type="evidence" value="ECO:0000250"/>
    <property type="project" value="UniProtKB"/>
</dbReference>
<dbReference type="GO" id="GO:0005637">
    <property type="term" value="C:nuclear inner membrane"/>
    <property type="evidence" value="ECO:0007669"/>
    <property type="project" value="UniProtKB-SubCell"/>
</dbReference>
<dbReference type="GO" id="GO:0031965">
    <property type="term" value="C:nuclear membrane"/>
    <property type="evidence" value="ECO:0000250"/>
    <property type="project" value="UniProtKB"/>
</dbReference>
<dbReference type="GO" id="GO:0106405">
    <property type="term" value="F:isoprenoid diphosphate phosphatase activity"/>
    <property type="evidence" value="ECO:0007669"/>
    <property type="project" value="Ensembl"/>
</dbReference>
<dbReference type="GO" id="GO:0052642">
    <property type="term" value="F:lysophosphatidic acid phosphatase activity"/>
    <property type="evidence" value="ECO:0000250"/>
    <property type="project" value="UniProtKB"/>
</dbReference>
<dbReference type="GO" id="GO:0008195">
    <property type="term" value="F:phosphatidate phosphatase activity"/>
    <property type="evidence" value="ECO:0007669"/>
    <property type="project" value="Ensembl"/>
</dbReference>
<dbReference type="GO" id="GO:0042392">
    <property type="term" value="F:sphingosine-1-phosphate phosphatase activity"/>
    <property type="evidence" value="ECO:0007669"/>
    <property type="project" value="Ensembl"/>
</dbReference>
<dbReference type="GO" id="GO:0045339">
    <property type="term" value="P:farnesyl diphosphate catabolic process"/>
    <property type="evidence" value="ECO:0000250"/>
    <property type="project" value="UniProtKB"/>
</dbReference>
<dbReference type="GO" id="GO:0033383">
    <property type="term" value="P:geranyl diphosphate metabolic process"/>
    <property type="evidence" value="ECO:0000250"/>
    <property type="project" value="UniProtKB"/>
</dbReference>
<dbReference type="GO" id="GO:1902247">
    <property type="term" value="P:geranylgeranyl diphosphate catabolic process"/>
    <property type="evidence" value="ECO:0000250"/>
    <property type="project" value="UniProtKB"/>
</dbReference>
<dbReference type="GO" id="GO:0045087">
    <property type="term" value="P:innate immune response"/>
    <property type="evidence" value="ECO:0007669"/>
    <property type="project" value="UniProtKB-KW"/>
</dbReference>
<dbReference type="GO" id="GO:0006720">
    <property type="term" value="P:isoprenoid metabolic process"/>
    <property type="evidence" value="ECO:0000250"/>
    <property type="project" value="UniProtKB"/>
</dbReference>
<dbReference type="GO" id="GO:0046839">
    <property type="term" value="P:phospholipid dephosphorylation"/>
    <property type="evidence" value="ECO:0007669"/>
    <property type="project" value="Ensembl"/>
</dbReference>
<dbReference type="GO" id="GO:1902565">
    <property type="term" value="P:positive regulation of neutrophil activation"/>
    <property type="evidence" value="ECO:0000250"/>
    <property type="project" value="UniProtKB"/>
</dbReference>
<dbReference type="GO" id="GO:0018342">
    <property type="term" value="P:protein prenylation"/>
    <property type="evidence" value="ECO:0000250"/>
    <property type="project" value="UniProtKB"/>
</dbReference>
<dbReference type="CDD" id="cd03391">
    <property type="entry name" value="PAP2_containing_2_like"/>
    <property type="match status" value="1"/>
</dbReference>
<dbReference type="FunFam" id="1.20.144.10:FF:000020">
    <property type="entry name" value="phospholipid phosphatase 6"/>
    <property type="match status" value="1"/>
</dbReference>
<dbReference type="Gene3D" id="1.20.144.10">
    <property type="entry name" value="Phosphatidic acid phosphatase type 2/haloperoxidase"/>
    <property type="match status" value="1"/>
</dbReference>
<dbReference type="InterPro" id="IPR036938">
    <property type="entry name" value="P_Acid_Pase_2/haloperoxi_sf"/>
</dbReference>
<dbReference type="InterPro" id="IPR000326">
    <property type="entry name" value="P_Acid_Pase_2/haloperoxidase"/>
</dbReference>
<dbReference type="PANTHER" id="PTHR14969:SF18">
    <property type="entry name" value="POLYISOPRENOID DIPHOSPHATE_PHOSPHATE PHOSPHOHYDROLASE PLPP6"/>
    <property type="match status" value="1"/>
</dbReference>
<dbReference type="PANTHER" id="PTHR14969">
    <property type="entry name" value="SPHINGOSINE-1-PHOSPHATE PHOSPHOHYDROLASE"/>
    <property type="match status" value="1"/>
</dbReference>
<dbReference type="Pfam" id="PF01569">
    <property type="entry name" value="PAP2"/>
    <property type="match status" value="1"/>
</dbReference>
<dbReference type="SMART" id="SM00014">
    <property type="entry name" value="acidPPc"/>
    <property type="match status" value="1"/>
</dbReference>
<dbReference type="SUPFAM" id="SSF48317">
    <property type="entry name" value="Acid phosphatase/Vanadium-dependent haloperoxidase"/>
    <property type="match status" value="1"/>
</dbReference>
<keyword id="KW-0256">Endoplasmic reticulum</keyword>
<keyword id="KW-0378">Hydrolase</keyword>
<keyword id="KW-0391">Immunity</keyword>
<keyword id="KW-0399">Innate immunity</keyword>
<keyword id="KW-0443">Lipid metabolism</keyword>
<keyword id="KW-0472">Membrane</keyword>
<keyword id="KW-0539">Nucleus</keyword>
<keyword id="KW-0597">Phosphoprotein</keyword>
<keyword id="KW-1185">Reference proteome</keyword>
<keyword id="KW-0812">Transmembrane</keyword>
<keyword id="KW-1133">Transmembrane helix</keyword>
<evidence type="ECO:0000250" key="1">
    <source>
        <dbReference type="UniProtKB" id="O34349"/>
    </source>
</evidence>
<evidence type="ECO:0000250" key="2">
    <source>
        <dbReference type="UniProtKB" id="Q8IY26"/>
    </source>
</evidence>
<evidence type="ECO:0000255" key="3"/>
<evidence type="ECO:0000256" key="4">
    <source>
        <dbReference type="SAM" id="MobiDB-lite"/>
    </source>
</evidence>
<evidence type="ECO:0000305" key="5"/>
<evidence type="ECO:0000312" key="6">
    <source>
        <dbReference type="MGI" id="MGI:1921661"/>
    </source>
</evidence>
<evidence type="ECO:0007744" key="7">
    <source>
    </source>
</evidence>
<evidence type="ECO:0007744" key="8">
    <source>
    </source>
</evidence>
<protein>
    <recommendedName>
        <fullName evidence="5">Polyisoprenoid diphosphate/phosphate phosphohydrolase PLPP6</fullName>
        <ecNumber evidence="2">3.1.3.-</ecNumber>
        <ecNumber evidence="2">3.6.1.-</ecNumber>
        <ecNumber evidence="2">3.6.1.68</ecNumber>
    </recommendedName>
    <alternativeName>
        <fullName evidence="6">Phospholipid phosphatase 6</fullName>
    </alternativeName>
</protein>
<gene>
    <name evidence="6" type="primary">Plpp6</name>
</gene>
<sequence>MPSPRRTIEGRPLGSSGGSSVPGSPAHGGGSGGGRFEFQSLLNCRAGADPACARLRASDSPVHRRGSFPLAASGPAQAAPAPPPEDARMNLNPSFLGIALRSLLAIDLWLSKKLGVCAGESSAWGSVRPLMKLLEISGHGIPWLLGTLYCLLRSDSWAGREVLMNLLFALLLDLLLVAVIKGLVRRRRPAHNQKDMFFTLSVDRYSFPSGHATRAALVSRFILNHLVLAIPLRVLVVLWAFVLGLSRVMLGRHNVTDVAFGFFLGYMQYSIVDYCWLSPHNVPVLFVLWNQQ</sequence>
<comment type="function">
    <text evidence="2">Magnesium-independent polyisoprenoid diphosphatase that catalyzes the sequential dephosphorylation of presqualene, farnesyl, geranyl and geranylgeranyl diphosphates. Functions in the innate immune response through the dephosphorylation of presqualene diphosphate which acts as a potent inhibitor of the signaling pathways contributing to polymorphonuclear neutrophils activation. May regulate the biosynthesis of cholesterol and related sterols by dephosphorylating presqualene and farnesyl diphosphate, two key intermediates in this biosynthetic pathway. May also play a role in protein prenylation by acting on farnesyl diphosphate and its derivative geranylgeranyl diphosphate, two precursors for the addition of isoprenoid anchors to membrane proteins. Has a lower activity towards phosphatidic acid (PA), but through phosphatidic acid dephosphorylation may participate in the biosynthesis of phospholipids and triacylglycerols. May also act on ceramide-1-P, lysophosphatidic acid (LPA) and sphing-4-enine 1-phosphate/sphingosine-1-phosphate.</text>
</comment>
<comment type="catalytic activity">
    <reaction evidence="2">
        <text>presqualene diphosphate + H2O = presqualene phosphate + phosphate + H(+)</text>
        <dbReference type="Rhea" id="RHEA:67968"/>
        <dbReference type="ChEBI" id="CHEBI:15377"/>
        <dbReference type="ChEBI" id="CHEBI:15378"/>
        <dbReference type="ChEBI" id="CHEBI:43474"/>
        <dbReference type="ChEBI" id="CHEBI:57310"/>
        <dbReference type="ChEBI" id="CHEBI:176803"/>
    </reaction>
    <physiologicalReaction direction="left-to-right" evidence="2">
        <dbReference type="Rhea" id="RHEA:67969"/>
    </physiologicalReaction>
</comment>
<comment type="catalytic activity">
    <reaction evidence="2">
        <text>presqualene phosphate + H2O = presqualene alcohol + phosphate</text>
        <dbReference type="Rhea" id="RHEA:68024"/>
        <dbReference type="ChEBI" id="CHEBI:15377"/>
        <dbReference type="ChEBI" id="CHEBI:43474"/>
        <dbReference type="ChEBI" id="CHEBI:176803"/>
        <dbReference type="ChEBI" id="CHEBI:176962"/>
    </reaction>
    <physiologicalReaction direction="left-to-right" evidence="2">
        <dbReference type="Rhea" id="RHEA:68025"/>
    </physiologicalReaction>
</comment>
<comment type="catalytic activity">
    <reaction evidence="2">
        <text>(2E,6E)-farnesyl diphosphate + H2O = (2E,6E)-farnesyl phosphate + phosphate + H(+)</text>
        <dbReference type="Rhea" id="RHEA:48128"/>
        <dbReference type="ChEBI" id="CHEBI:15377"/>
        <dbReference type="ChEBI" id="CHEBI:15378"/>
        <dbReference type="ChEBI" id="CHEBI:43474"/>
        <dbReference type="ChEBI" id="CHEBI:88226"/>
        <dbReference type="ChEBI" id="CHEBI:175763"/>
    </reaction>
    <physiologicalReaction direction="left-to-right" evidence="2">
        <dbReference type="Rhea" id="RHEA:48129"/>
    </physiologicalReaction>
</comment>
<comment type="catalytic activity">
    <reaction evidence="2">
        <text>(2E,6E)-farnesyl phosphate + H2O = (2E,6E)-farnesol + phosphate</text>
        <dbReference type="Rhea" id="RHEA:48132"/>
        <dbReference type="ChEBI" id="CHEBI:15377"/>
        <dbReference type="ChEBI" id="CHEBI:16619"/>
        <dbReference type="ChEBI" id="CHEBI:43474"/>
        <dbReference type="ChEBI" id="CHEBI:88226"/>
    </reaction>
    <physiologicalReaction direction="left-to-right" evidence="2">
        <dbReference type="Rhea" id="RHEA:48133"/>
    </physiologicalReaction>
</comment>
<comment type="catalytic activity">
    <reaction evidence="2">
        <text>(2E,6E,10E)-geranylgeranyl diphosphate + H2O = (2E,6E,10E)-geranylgeranyl phosphate + phosphate + H(+)</text>
        <dbReference type="Rhea" id="RHEA:68008"/>
        <dbReference type="ChEBI" id="CHEBI:15377"/>
        <dbReference type="ChEBI" id="CHEBI:15378"/>
        <dbReference type="ChEBI" id="CHEBI:43474"/>
        <dbReference type="ChEBI" id="CHEBI:58756"/>
        <dbReference type="ChEBI" id="CHEBI:144936"/>
    </reaction>
    <physiologicalReaction direction="left-to-right" evidence="2">
        <dbReference type="Rhea" id="RHEA:68009"/>
    </physiologicalReaction>
</comment>
<comment type="catalytic activity">
    <reaction evidence="2">
        <text>(2E,6E,10E)-geranylgeranyl phosphate + H2O = (2E,6E,10E)-geranylgeraniol + phosphate</text>
        <dbReference type="Rhea" id="RHEA:68016"/>
        <dbReference type="ChEBI" id="CHEBI:15377"/>
        <dbReference type="ChEBI" id="CHEBI:43474"/>
        <dbReference type="ChEBI" id="CHEBI:46762"/>
        <dbReference type="ChEBI" id="CHEBI:144936"/>
    </reaction>
    <physiologicalReaction direction="left-to-right" evidence="2">
        <dbReference type="Rhea" id="RHEA:68017"/>
    </physiologicalReaction>
</comment>
<comment type="catalytic activity">
    <reaction evidence="2">
        <text>(2E)-geranyl diphosphate + H2O = (2E)-geranyl phosphate + phosphate + H(+)</text>
        <dbReference type="Rhea" id="RHEA:47944"/>
        <dbReference type="ChEBI" id="CHEBI:15377"/>
        <dbReference type="ChEBI" id="CHEBI:15378"/>
        <dbReference type="ChEBI" id="CHEBI:43474"/>
        <dbReference type="ChEBI" id="CHEBI:58057"/>
        <dbReference type="ChEBI" id="CHEBI:88107"/>
        <dbReference type="EC" id="3.6.1.68"/>
    </reaction>
    <physiologicalReaction direction="left-to-right" evidence="2">
        <dbReference type="Rhea" id="RHEA:47945"/>
    </physiologicalReaction>
</comment>
<comment type="catalytic activity">
    <reaction evidence="2">
        <text>(2E)-geranyl phosphate + H2O = (2E)-geraniol + phosphate</text>
        <dbReference type="Rhea" id="RHEA:68020"/>
        <dbReference type="ChEBI" id="CHEBI:15377"/>
        <dbReference type="ChEBI" id="CHEBI:17447"/>
        <dbReference type="ChEBI" id="CHEBI:43474"/>
        <dbReference type="ChEBI" id="CHEBI:88107"/>
    </reaction>
    <physiologicalReaction direction="left-to-right" evidence="2">
        <dbReference type="Rhea" id="RHEA:68021"/>
    </physiologicalReaction>
</comment>
<comment type="catalytic activity">
    <reaction evidence="2">
        <text>1,2-dihexadecanoyl-sn-glycero-3-phosphate + H2O = 1,2-dihexadecanoyl-sn-glycerol + phosphate</text>
        <dbReference type="Rhea" id="RHEA:43236"/>
        <dbReference type="ChEBI" id="CHEBI:15377"/>
        <dbReference type="ChEBI" id="CHEBI:43474"/>
        <dbReference type="ChEBI" id="CHEBI:72859"/>
        <dbReference type="ChEBI" id="CHEBI:82929"/>
    </reaction>
    <physiologicalReaction direction="left-to-right" evidence="2">
        <dbReference type="Rhea" id="RHEA:43237"/>
    </physiologicalReaction>
</comment>
<comment type="subcellular location">
    <subcellularLocation>
        <location evidence="2">Endoplasmic reticulum membrane</location>
        <topology evidence="2">Multi-pass membrane protein</topology>
    </subcellularLocation>
    <subcellularLocation>
        <location evidence="2">Nucleus envelope</location>
    </subcellularLocation>
    <subcellularLocation>
        <location evidence="2">Nucleus inner membrane</location>
    </subcellularLocation>
</comment>
<comment type="PTM">
    <text evidence="2">Phosphorylation by PKC activates the phosphatase activity towards presqualene diphosphate.</text>
</comment>
<comment type="similarity">
    <text evidence="5">Belongs to the PA-phosphatase related phosphoesterase family.</text>
</comment>
<name>PLPP6_MOUSE</name>
<organism>
    <name type="scientific">Mus musculus</name>
    <name type="common">Mouse</name>
    <dbReference type="NCBI Taxonomy" id="10090"/>
    <lineage>
        <taxon>Eukaryota</taxon>
        <taxon>Metazoa</taxon>
        <taxon>Chordata</taxon>
        <taxon>Craniata</taxon>
        <taxon>Vertebrata</taxon>
        <taxon>Euteleostomi</taxon>
        <taxon>Mammalia</taxon>
        <taxon>Eutheria</taxon>
        <taxon>Euarchontoglires</taxon>
        <taxon>Glires</taxon>
        <taxon>Rodentia</taxon>
        <taxon>Myomorpha</taxon>
        <taxon>Muroidea</taxon>
        <taxon>Muridae</taxon>
        <taxon>Murinae</taxon>
        <taxon>Mus</taxon>
        <taxon>Mus</taxon>
    </lineage>
</organism>
<feature type="chain" id="PRO_0000239397" description="Polyisoprenoid diphosphate/phosphate phosphohydrolase PLPP6">
    <location>
        <begin position="1"/>
        <end position="292"/>
    </location>
</feature>
<feature type="topological domain" description="Cytoplasmic" evidence="2">
    <location>
        <begin position="1"/>
        <end position="131"/>
    </location>
</feature>
<feature type="transmembrane region" description="Helical" evidence="3">
    <location>
        <begin position="132"/>
        <end position="152"/>
    </location>
</feature>
<feature type="topological domain" description="Lumenal" evidence="2">
    <location>
        <begin position="153"/>
        <end position="161"/>
    </location>
</feature>
<feature type="transmembrane region" description="Helical" evidence="3">
    <location>
        <begin position="162"/>
        <end position="182"/>
    </location>
</feature>
<feature type="topological domain" description="Cytoplasmic" evidence="2">
    <location>
        <begin position="183"/>
        <end position="225"/>
    </location>
</feature>
<feature type="transmembrane region" description="Helical" evidence="3">
    <location>
        <begin position="226"/>
        <end position="246"/>
    </location>
</feature>
<feature type="topological domain" description="Lumenal" evidence="2">
    <location>
        <begin position="247"/>
        <end position="257"/>
    </location>
</feature>
<feature type="transmembrane region" description="Helical" evidence="3">
    <location>
        <begin position="258"/>
        <end position="278"/>
    </location>
</feature>
<feature type="topological domain" description="Cytoplasmic" evidence="2">
    <location>
        <begin position="279"/>
        <end position="292"/>
    </location>
</feature>
<feature type="region of interest" description="Disordered" evidence="4">
    <location>
        <begin position="1"/>
        <end position="34"/>
    </location>
</feature>
<feature type="region of interest" description="Disordered" evidence="4">
    <location>
        <begin position="66"/>
        <end position="86"/>
    </location>
</feature>
<feature type="region of interest" description="Phosphatase sequence motif I" evidence="1">
    <location>
        <begin position="181"/>
        <end position="189"/>
    </location>
</feature>
<feature type="region of interest" description="Phosphatase sequence motif II" evidence="1">
    <location>
        <begin position="208"/>
        <end position="211"/>
    </location>
</feature>
<feature type="region of interest" description="Phosphatase sequence motif III" evidence="1">
    <location>
        <begin position="246"/>
        <end position="257"/>
    </location>
</feature>
<feature type="compositionally biased region" description="Low complexity" evidence="4">
    <location>
        <begin position="10"/>
        <end position="25"/>
    </location>
</feature>
<feature type="compositionally biased region" description="Low complexity" evidence="4">
    <location>
        <begin position="69"/>
        <end position="79"/>
    </location>
</feature>
<feature type="active site" description="Proton donors" evidence="1">
    <location>
        <position position="211"/>
    </location>
</feature>
<feature type="active site" description="Nucleophile" evidence="1">
    <location>
        <position position="253"/>
    </location>
</feature>
<feature type="site" description="Stabilizes the active site histidine for nucleophilic attack" evidence="1">
    <location>
        <position position="257"/>
    </location>
</feature>
<feature type="modified residue" description="Phosphoserine" evidence="2">
    <location>
        <position position="24"/>
    </location>
</feature>
<feature type="modified residue" description="Phosphoserine" evidence="7 8">
    <location>
        <position position="67"/>
    </location>
</feature>